<accession>C9JVW0</accession>
<dbReference type="EMBL" id="AC008532">
    <property type="status" value="NOT_ANNOTATED_CDS"/>
    <property type="molecule type" value="Genomic_DNA"/>
</dbReference>
<dbReference type="CCDS" id="CCDS46131.1"/>
<dbReference type="RefSeq" id="NP_848606.3">
    <property type="nucleotide sequence ID" value="NM_178511.6"/>
</dbReference>
<dbReference type="SMR" id="C9JVW0"/>
<dbReference type="FunCoup" id="C9JVW0">
    <property type="interactions" value="54"/>
</dbReference>
<dbReference type="STRING" id="9606.ENSP00000447679"/>
<dbReference type="TCDB" id="8.A.135.2.1">
    <property type="family name" value="the trp cation channel auxiliary subunit, inaf (inaf) family"/>
</dbReference>
<dbReference type="BioMuta" id="INAFM1"/>
<dbReference type="MassIVE" id="C9JVW0"/>
<dbReference type="PaxDb" id="9606-ENSP00000447679"/>
<dbReference type="PeptideAtlas" id="C9JVW0"/>
<dbReference type="ProteomicsDB" id="11908"/>
<dbReference type="Antibodypedia" id="67949">
    <property type="antibodies" value="54 antibodies from 12 providers"/>
</dbReference>
<dbReference type="Ensembl" id="ENST00000552360.4">
    <property type="protein sequence ID" value="ENSP00000447679.1"/>
    <property type="gene ID" value="ENSG00000257704.4"/>
</dbReference>
<dbReference type="GeneID" id="255783"/>
<dbReference type="KEGG" id="hsa:255783"/>
<dbReference type="MANE-Select" id="ENST00000552360.4">
    <property type="protein sequence ID" value="ENSP00000447679.1"/>
    <property type="RefSeq nucleotide sequence ID" value="NM_178511.6"/>
    <property type="RefSeq protein sequence ID" value="NP_848606.3"/>
</dbReference>
<dbReference type="UCSC" id="uc002pgi.4">
    <property type="organism name" value="human"/>
</dbReference>
<dbReference type="AGR" id="HGNC:27406"/>
<dbReference type="CTD" id="255783"/>
<dbReference type="GeneCards" id="INAFM1"/>
<dbReference type="HGNC" id="HGNC:27406">
    <property type="gene designation" value="INAFM1"/>
</dbReference>
<dbReference type="HPA" id="ENSG00000257704">
    <property type="expression patterns" value="Low tissue specificity"/>
</dbReference>
<dbReference type="neXtProt" id="NX_C9JVW0"/>
<dbReference type="OpenTargets" id="ENSG00000257704"/>
<dbReference type="VEuPathDB" id="HostDB:ENSG00000257704"/>
<dbReference type="eggNOG" id="ENOG502SYRX">
    <property type="taxonomic scope" value="Eukaryota"/>
</dbReference>
<dbReference type="GeneTree" id="ENSGT00550000076229"/>
<dbReference type="HOGENOM" id="CLU_1805556_0_0_1"/>
<dbReference type="InParanoid" id="C9JVW0"/>
<dbReference type="OMA" id="RISMSIC"/>
<dbReference type="PAN-GO" id="C9JVW0">
    <property type="GO annotations" value="0 GO annotations based on evolutionary models"/>
</dbReference>
<dbReference type="PhylomeDB" id="C9JVW0"/>
<dbReference type="PathwayCommons" id="C9JVW0"/>
<dbReference type="BioGRID-ORCS" id="255783">
    <property type="hits" value="35 hits in 1141 CRISPR screens"/>
</dbReference>
<dbReference type="ChiTaRS" id="INAFM1">
    <property type="organism name" value="human"/>
</dbReference>
<dbReference type="GenomeRNAi" id="255783"/>
<dbReference type="Pharos" id="C9JVW0">
    <property type="development level" value="Tbio"/>
</dbReference>
<dbReference type="PRO" id="PR:C9JVW0"/>
<dbReference type="Proteomes" id="UP000005640">
    <property type="component" value="Chromosome 19"/>
</dbReference>
<dbReference type="RNAct" id="C9JVW0">
    <property type="molecule type" value="protein"/>
</dbReference>
<dbReference type="Bgee" id="ENSG00000257704">
    <property type="expression patterns" value="Expressed in decidua and 176 other cell types or tissues"/>
</dbReference>
<dbReference type="GO" id="GO:0016020">
    <property type="term" value="C:membrane"/>
    <property type="evidence" value="ECO:0007669"/>
    <property type="project" value="UniProtKB-SubCell"/>
</dbReference>
<dbReference type="InterPro" id="IPR029162">
    <property type="entry name" value="InaF-motif"/>
</dbReference>
<dbReference type="PANTHER" id="PTHR34929:SF2">
    <property type="entry name" value="TRANSMEMBRANE PROTEIN INAFM1-RELATED"/>
    <property type="match status" value="1"/>
</dbReference>
<dbReference type="PANTHER" id="PTHR34929">
    <property type="entry name" value="ZGC:153157"/>
    <property type="match status" value="1"/>
</dbReference>
<dbReference type="Pfam" id="PF15018">
    <property type="entry name" value="InaF-motif"/>
    <property type="match status" value="1"/>
</dbReference>
<gene>
    <name evidence="4" type="primary">INAFM1</name>
    <name evidence="4" type="synonym">PRR24</name>
</gene>
<name>INAM1_HUMAN</name>
<feature type="chain" id="PRO_0000394048" description="Putative transmembrane protein INAFM1">
    <location>
        <begin position="1"/>
        <end position="142"/>
    </location>
</feature>
<feature type="transmembrane region" description="Helical" evidence="1">
    <location>
        <begin position="36"/>
        <end position="56"/>
    </location>
</feature>
<feature type="region of interest" description="Disordered" evidence="2">
    <location>
        <begin position="1"/>
        <end position="22"/>
    </location>
</feature>
<feature type="region of interest" description="Disordered" evidence="2">
    <location>
        <begin position="61"/>
        <end position="83"/>
    </location>
</feature>
<feature type="region of interest" description="Disordered" evidence="2">
    <location>
        <begin position="99"/>
        <end position="142"/>
    </location>
</feature>
<feature type="compositionally biased region" description="Gly residues" evidence="2">
    <location>
        <begin position="1"/>
        <end position="19"/>
    </location>
</feature>
<feature type="compositionally biased region" description="Pro residues" evidence="2">
    <location>
        <begin position="64"/>
        <end position="83"/>
    </location>
</feature>
<feature type="compositionally biased region" description="Low complexity" evidence="2">
    <location>
        <begin position="99"/>
        <end position="111"/>
    </location>
</feature>
<feature type="compositionally biased region" description="Basic and acidic residues" evidence="2">
    <location>
        <begin position="117"/>
        <end position="142"/>
    </location>
</feature>
<proteinExistence type="evidence at protein level"/>
<evidence type="ECO:0000255" key="1"/>
<evidence type="ECO:0000256" key="2">
    <source>
        <dbReference type="SAM" id="MobiDB-lite"/>
    </source>
</evidence>
<evidence type="ECO:0000305" key="3"/>
<evidence type="ECO:0000312" key="4">
    <source>
        <dbReference type="HGNC" id="HGNC:27406"/>
    </source>
</evidence>
<organism>
    <name type="scientific">Homo sapiens</name>
    <name type="common">Human</name>
    <dbReference type="NCBI Taxonomy" id="9606"/>
    <lineage>
        <taxon>Eukaryota</taxon>
        <taxon>Metazoa</taxon>
        <taxon>Chordata</taxon>
        <taxon>Craniata</taxon>
        <taxon>Vertebrata</taxon>
        <taxon>Euteleostomi</taxon>
        <taxon>Mammalia</taxon>
        <taxon>Eutheria</taxon>
        <taxon>Euarchontoglires</taxon>
        <taxon>Primates</taxon>
        <taxon>Haplorrhini</taxon>
        <taxon>Catarrhini</taxon>
        <taxon>Hominidae</taxon>
        <taxon>Homo</taxon>
    </lineage>
</organism>
<reference key="1">
    <citation type="journal article" date="2004" name="Nature">
        <title>The DNA sequence and biology of human chromosome 19.</title>
        <authorList>
            <person name="Grimwood J."/>
            <person name="Gordon L.A."/>
            <person name="Olsen A.S."/>
            <person name="Terry A."/>
            <person name="Schmutz J."/>
            <person name="Lamerdin J.E."/>
            <person name="Hellsten U."/>
            <person name="Goodstein D."/>
            <person name="Couronne O."/>
            <person name="Tran-Gyamfi M."/>
            <person name="Aerts A."/>
            <person name="Altherr M."/>
            <person name="Ashworth L."/>
            <person name="Bajorek E."/>
            <person name="Black S."/>
            <person name="Branscomb E."/>
            <person name="Caenepeel S."/>
            <person name="Carrano A.V."/>
            <person name="Caoile C."/>
            <person name="Chan Y.M."/>
            <person name="Christensen M."/>
            <person name="Cleland C.A."/>
            <person name="Copeland A."/>
            <person name="Dalin E."/>
            <person name="Dehal P."/>
            <person name="Denys M."/>
            <person name="Detter J.C."/>
            <person name="Escobar J."/>
            <person name="Flowers D."/>
            <person name="Fotopulos D."/>
            <person name="Garcia C."/>
            <person name="Georgescu A.M."/>
            <person name="Glavina T."/>
            <person name="Gomez M."/>
            <person name="Gonzales E."/>
            <person name="Groza M."/>
            <person name="Hammon N."/>
            <person name="Hawkins T."/>
            <person name="Haydu L."/>
            <person name="Ho I."/>
            <person name="Huang W."/>
            <person name="Israni S."/>
            <person name="Jett J."/>
            <person name="Kadner K."/>
            <person name="Kimball H."/>
            <person name="Kobayashi A."/>
            <person name="Larionov V."/>
            <person name="Leem S.-H."/>
            <person name="Lopez F."/>
            <person name="Lou Y."/>
            <person name="Lowry S."/>
            <person name="Malfatti S."/>
            <person name="Martinez D."/>
            <person name="McCready P.M."/>
            <person name="Medina C."/>
            <person name="Morgan J."/>
            <person name="Nelson K."/>
            <person name="Nolan M."/>
            <person name="Ovcharenko I."/>
            <person name="Pitluck S."/>
            <person name="Pollard M."/>
            <person name="Popkie A.P."/>
            <person name="Predki P."/>
            <person name="Quan G."/>
            <person name="Ramirez L."/>
            <person name="Rash S."/>
            <person name="Retterer J."/>
            <person name="Rodriguez A."/>
            <person name="Rogers S."/>
            <person name="Salamov A."/>
            <person name="Salazar A."/>
            <person name="She X."/>
            <person name="Smith D."/>
            <person name="Slezak T."/>
            <person name="Solovyev V."/>
            <person name="Thayer N."/>
            <person name="Tice H."/>
            <person name="Tsai M."/>
            <person name="Ustaszewska A."/>
            <person name="Vo N."/>
            <person name="Wagner M."/>
            <person name="Wheeler J."/>
            <person name="Wu K."/>
            <person name="Xie G."/>
            <person name="Yang J."/>
            <person name="Dubchak I."/>
            <person name="Furey T.S."/>
            <person name="DeJong P."/>
            <person name="Dickson M."/>
            <person name="Gordon D."/>
            <person name="Eichler E.E."/>
            <person name="Pennacchio L.A."/>
            <person name="Richardson P."/>
            <person name="Stubbs L."/>
            <person name="Rokhsar D.S."/>
            <person name="Myers R.M."/>
            <person name="Rubin E.M."/>
            <person name="Lucas S.M."/>
        </authorList>
    </citation>
    <scope>NUCLEOTIDE SEQUENCE [LARGE SCALE GENOMIC DNA]</scope>
</reference>
<comment type="subcellular location">
    <subcellularLocation>
        <location evidence="3">Membrane</location>
        <topology evidence="3">Single-pass membrane protein</topology>
    </subcellularLocation>
</comment>
<protein>
    <recommendedName>
        <fullName evidence="3">Putative transmembrane protein INAFM1</fullName>
    </recommendedName>
    <alternativeName>
        <fullName evidence="4">InaF-motif-containing protein 1</fullName>
    </alternativeName>
    <alternativeName>
        <fullName evidence="4">Proline-rich protein 24</fullName>
    </alternativeName>
</protein>
<sequence length="142" mass="14668">MRGTSCVGGGAESPGGAGLSEGPRGRWLRLAPVCAYFLCVSLAAVLLAVYYGLIWVPTRSPAAPAGPQPSAPSPPCAARPGVPPVPAPAAASLSCLLGVPGGPRPQLQLPLSRRRRYSDPDRRPSRQTPRETPEAAEGRRPG</sequence>
<keyword id="KW-0472">Membrane</keyword>
<keyword id="KW-1267">Proteomics identification</keyword>
<keyword id="KW-1185">Reference proteome</keyword>
<keyword id="KW-0812">Transmembrane</keyword>
<keyword id="KW-1133">Transmembrane helix</keyword>